<accession>Q4G0F5</accession>
<accession>Q96A55</accession>
<comment type="function">
    <text evidence="1 2">Acts as a component of the retromer cargo-selective complex (CSC). The CSC is believed to be the core functional component of retromer or respective retromer complex variants acting to prevent missorting of selected transmembrane cargo proteins into the lysosomal degradation pathway. The recruitment of the CSC to the endosomal membrane involves RAB7A and SNX3. The SNX-BAR retromer mediates retrograde transport of cargo proteins from endosomes to the trans-Golgi network (TGN) and is involved in endosome-to-plasma membrane transport for cargo protein recycling. The SNX3-retromer mediates the retrograde transport of WLS distinct from the SNX-BAR retromer pathway. The SNX27-retromer is believed to be involved in endosome-to-plasma membrane trafficking and recycling of a broad spectrum of cargo proteins. The CSC seems to act as recruitment hub for other proteins, such as the WASH complex and TBC1D5. May be involved in retrograde transport of SORT1 but not of IGF2R. Acts redundantly with VSP26A in SNX-27 mediated endocytic recycling of SLC2A1/GLUT1 (By similarity).</text>
</comment>
<comment type="subunit">
    <text evidence="1 2">Component of the heterotrimeric retromer cargo-selective complex (CSC), also described as vacuolar protein sorting VPS subcomplex (VPS,) formed by VPS26 (VPS26A or VPS26B), VPS29 and VPS35. The CSC has a highly elongated structure with VPS26 and VPS29 binding independently at opposite distal ends of VPS35 as central platform. The CSC is believed to associate with variable sorting nexins to form functionally distinct retromer complex variants. The originally described retromer complex (also called SNX-BAR retromer) is a pentamer containing the CSC and a heterodimeric membrane-deforming subcomplex formed between SNX1 or SNX2 and SNX5 or SNX6 (also called SNX-BAR subcomplex); the respective CSC and SNX-BAR subcomplexes associate with low affinity. The CSC associates with SNX3 to form a SNX3-retromer complex. The CSC associates with SNX27, the WASH complex and the SNX-BAR subcomplex to form the SNX27-retromer complex. Interacts with VPS29, VPS35, TBC1D5, GOLPH3, SNX27 (By similarity).</text>
</comment>
<comment type="interaction">
    <interactant intactId="EBI-6151831">
        <id>Q4G0F5</id>
    </interactant>
    <interactant intactId="EBI-1994109">
        <id>Q8TAT6</id>
        <label>NPLOC4</label>
    </interactant>
    <organismsDiffer>false</organismsDiffer>
    <experiments>3</experiments>
</comment>
<comment type="interaction">
    <interactant intactId="EBI-6151831">
        <id>Q4G0F5</id>
    </interactant>
    <interactant intactId="EBI-1054634">
        <id>Q96QK1</id>
        <label>VPS35</label>
    </interactant>
    <organismsDiffer>false</organismsDiffer>
    <experiments>11</experiments>
</comment>
<comment type="subcellular location">
    <subcellularLocation>
        <location evidence="2">Cytoplasm</location>
    </subcellularLocation>
    <subcellularLocation>
        <location>Membrane</location>
        <topology evidence="2">Peripheral membrane protein</topology>
    </subcellularLocation>
    <subcellularLocation>
        <location evidence="2">Early endosome</location>
    </subcellularLocation>
    <subcellularLocation>
        <location evidence="2">Late endosome</location>
    </subcellularLocation>
    <text evidence="2">Localizes to early and late endosomal structures (By similarity).</text>
</comment>
<comment type="similarity">
    <text evidence="3">Belongs to the VPS26 family.</text>
</comment>
<organism>
    <name type="scientific">Homo sapiens</name>
    <name type="common">Human</name>
    <dbReference type="NCBI Taxonomy" id="9606"/>
    <lineage>
        <taxon>Eukaryota</taxon>
        <taxon>Metazoa</taxon>
        <taxon>Chordata</taxon>
        <taxon>Craniata</taxon>
        <taxon>Vertebrata</taxon>
        <taxon>Euteleostomi</taxon>
        <taxon>Mammalia</taxon>
        <taxon>Eutheria</taxon>
        <taxon>Euarchontoglires</taxon>
        <taxon>Primates</taxon>
        <taxon>Haplorrhini</taxon>
        <taxon>Catarrhini</taxon>
        <taxon>Hominidae</taxon>
        <taxon>Homo</taxon>
    </lineage>
</organism>
<feature type="chain" id="PRO_0000247089" description="Vacuolar protein sorting-associated protein 26B">
    <location>
        <begin position="1"/>
        <end position="336"/>
    </location>
</feature>
<feature type="modified residue" description="Phosphoserine" evidence="6 8">
    <location>
        <position position="302"/>
    </location>
</feature>
<feature type="modified residue" description="Phosphoserine" evidence="4 7 8">
    <location>
        <position position="304"/>
    </location>
</feature>
<feature type="modified residue" description="Phosphoserine" evidence="5 7">
    <location>
        <position position="319"/>
    </location>
</feature>
<feature type="sequence conflict" description="In Ref. 2; AAH98386." evidence="3" ref="2">
    <original>K</original>
    <variation>R</variation>
    <location>
        <position position="55"/>
    </location>
</feature>
<keyword id="KW-0963">Cytoplasm</keyword>
<keyword id="KW-0967">Endosome</keyword>
<keyword id="KW-0472">Membrane</keyword>
<keyword id="KW-0597">Phosphoprotein</keyword>
<keyword id="KW-0653">Protein transport</keyword>
<keyword id="KW-1267">Proteomics identification</keyword>
<keyword id="KW-1185">Reference proteome</keyword>
<keyword id="KW-0813">Transport</keyword>
<evidence type="ECO:0000250" key="1">
    <source>
        <dbReference type="UniProtKB" id="O75436"/>
    </source>
</evidence>
<evidence type="ECO:0000250" key="2">
    <source>
        <dbReference type="UniProtKB" id="Q8C0E2"/>
    </source>
</evidence>
<evidence type="ECO:0000305" key="3"/>
<evidence type="ECO:0007744" key="4">
    <source>
    </source>
</evidence>
<evidence type="ECO:0007744" key="5">
    <source>
    </source>
</evidence>
<evidence type="ECO:0007744" key="6">
    <source>
    </source>
</evidence>
<evidence type="ECO:0007744" key="7">
    <source>
    </source>
</evidence>
<evidence type="ECO:0007744" key="8">
    <source>
    </source>
</evidence>
<reference key="1">
    <citation type="submission" date="2001-11" db="EMBL/GenBank/DDBJ databases">
        <authorList>
            <person name="Kim N.-S."/>
            <person name="Shon H.-Y."/>
            <person name="Oh J.-H."/>
            <person name="Lee J.-Y."/>
            <person name="Kim J.-M."/>
            <person name="Hahn Y."/>
            <person name="Park H.-S."/>
            <person name="Kim S."/>
            <person name="Kim Y.S."/>
        </authorList>
    </citation>
    <scope>NUCLEOTIDE SEQUENCE [MRNA]</scope>
</reference>
<reference key="2">
    <citation type="journal article" date="2004" name="Genome Res.">
        <title>The status, quality, and expansion of the NIH full-length cDNA project: the Mammalian Gene Collection (MGC).</title>
        <authorList>
            <consortium name="The MGC Project Team"/>
        </authorList>
    </citation>
    <scope>NUCLEOTIDE SEQUENCE [LARGE SCALE MRNA]</scope>
    <source>
        <tissue>Eye</tissue>
        <tissue>Lung</tissue>
        <tissue>Placenta</tissue>
    </source>
</reference>
<reference key="3">
    <citation type="journal article" date="2008" name="Proc. Natl. Acad. Sci. U.S.A.">
        <title>A quantitative atlas of mitotic phosphorylation.</title>
        <authorList>
            <person name="Dephoure N."/>
            <person name="Zhou C."/>
            <person name="Villen J."/>
            <person name="Beausoleil S.A."/>
            <person name="Bakalarski C.E."/>
            <person name="Elledge S.J."/>
            <person name="Gygi S.P."/>
        </authorList>
    </citation>
    <scope>IDENTIFICATION BY MASS SPECTROMETRY [LARGE SCALE ANALYSIS]</scope>
    <source>
        <tissue>Cervix carcinoma</tissue>
    </source>
</reference>
<reference key="4">
    <citation type="journal article" date="2009" name="Anal. Chem.">
        <title>Lys-N and trypsin cover complementary parts of the phosphoproteome in a refined SCX-based approach.</title>
        <authorList>
            <person name="Gauci S."/>
            <person name="Helbig A.O."/>
            <person name="Slijper M."/>
            <person name="Krijgsveld J."/>
            <person name="Heck A.J."/>
            <person name="Mohammed S."/>
        </authorList>
    </citation>
    <scope>IDENTIFICATION BY MASS SPECTROMETRY [LARGE SCALE ANALYSIS]</scope>
</reference>
<reference key="5">
    <citation type="journal article" date="2009" name="Sci. Signal.">
        <title>Quantitative phosphoproteomic analysis of T cell receptor signaling reveals system-wide modulation of protein-protein interactions.</title>
        <authorList>
            <person name="Mayya V."/>
            <person name="Lundgren D.H."/>
            <person name="Hwang S.-I."/>
            <person name="Rezaul K."/>
            <person name="Wu L."/>
            <person name="Eng J.K."/>
            <person name="Rodionov V."/>
            <person name="Han D.K."/>
        </authorList>
    </citation>
    <scope>PHOSPHORYLATION [LARGE SCALE ANALYSIS] AT SER-304</scope>
    <scope>IDENTIFICATION BY MASS SPECTROMETRY [LARGE SCALE ANALYSIS]</scope>
    <source>
        <tissue>Leukemic T-cell</tissue>
    </source>
</reference>
<reference key="6">
    <citation type="journal article" date="2010" name="Sci. Signal.">
        <title>Quantitative phosphoproteomics reveals widespread full phosphorylation site occupancy during mitosis.</title>
        <authorList>
            <person name="Olsen J.V."/>
            <person name="Vermeulen M."/>
            <person name="Santamaria A."/>
            <person name="Kumar C."/>
            <person name="Miller M.L."/>
            <person name="Jensen L.J."/>
            <person name="Gnad F."/>
            <person name="Cox J."/>
            <person name="Jensen T.S."/>
            <person name="Nigg E.A."/>
            <person name="Brunak S."/>
            <person name="Mann M."/>
        </authorList>
    </citation>
    <scope>PHOSPHORYLATION [LARGE SCALE ANALYSIS] AT SER-319</scope>
    <scope>IDENTIFICATION BY MASS SPECTROMETRY [LARGE SCALE ANALYSIS]</scope>
    <source>
        <tissue>Cervix carcinoma</tissue>
    </source>
</reference>
<reference key="7">
    <citation type="journal article" date="2011" name="BMC Syst. Biol.">
        <title>Initial characterization of the human central proteome.</title>
        <authorList>
            <person name="Burkard T.R."/>
            <person name="Planyavsky M."/>
            <person name="Kaupe I."/>
            <person name="Breitwieser F.P."/>
            <person name="Buerckstuemmer T."/>
            <person name="Bennett K.L."/>
            <person name="Superti-Furga G."/>
            <person name="Colinge J."/>
        </authorList>
    </citation>
    <scope>IDENTIFICATION BY MASS SPECTROMETRY [LARGE SCALE ANALYSIS]</scope>
</reference>
<reference key="8">
    <citation type="journal article" date="2011" name="Sci. Signal.">
        <title>System-wide temporal characterization of the proteome and phosphoproteome of human embryonic stem cell differentiation.</title>
        <authorList>
            <person name="Rigbolt K.T."/>
            <person name="Prokhorova T.A."/>
            <person name="Akimov V."/>
            <person name="Henningsen J."/>
            <person name="Johansen P.T."/>
            <person name="Kratchmarova I."/>
            <person name="Kassem M."/>
            <person name="Mann M."/>
            <person name="Olsen J.V."/>
            <person name="Blagoev B."/>
        </authorList>
    </citation>
    <scope>PHOSPHORYLATION [LARGE SCALE ANALYSIS] AT SER-302</scope>
    <scope>IDENTIFICATION BY MASS SPECTROMETRY [LARGE SCALE ANALYSIS]</scope>
</reference>
<reference key="9">
    <citation type="journal article" date="2013" name="J. Proteome Res.">
        <title>Toward a comprehensive characterization of a human cancer cell phosphoproteome.</title>
        <authorList>
            <person name="Zhou H."/>
            <person name="Di Palma S."/>
            <person name="Preisinger C."/>
            <person name="Peng M."/>
            <person name="Polat A.N."/>
            <person name="Heck A.J."/>
            <person name="Mohammed S."/>
        </authorList>
    </citation>
    <scope>PHOSPHORYLATION [LARGE SCALE ANALYSIS] AT SER-304 AND SER-319</scope>
    <scope>IDENTIFICATION BY MASS SPECTROMETRY [LARGE SCALE ANALYSIS]</scope>
    <source>
        <tissue>Cervix carcinoma</tissue>
        <tissue>Erythroleukemia</tissue>
    </source>
</reference>
<reference key="10">
    <citation type="journal article" date="2014" name="J. Proteomics">
        <title>An enzyme assisted RP-RPLC approach for in-depth analysis of human liver phosphoproteome.</title>
        <authorList>
            <person name="Bian Y."/>
            <person name="Song C."/>
            <person name="Cheng K."/>
            <person name="Dong M."/>
            <person name="Wang F."/>
            <person name="Huang J."/>
            <person name="Sun D."/>
            <person name="Wang L."/>
            <person name="Ye M."/>
            <person name="Zou H."/>
        </authorList>
    </citation>
    <scope>PHOSPHORYLATION [LARGE SCALE ANALYSIS] AT SER-302 AND SER-304</scope>
    <scope>IDENTIFICATION BY MASS SPECTROMETRY [LARGE SCALE ANALYSIS]</scope>
    <source>
        <tissue>Liver</tissue>
    </source>
</reference>
<sequence>MSFFGFGQSVEVEILLNDAESRKRAEHKTEDGKKEKYFLFYDGETVSGKVSLALKNPNKRLEHQGIKIEFIGQIELYYDRGNHHEFVSLVKDLARPGEITQSQAFDFEFTHVEKPYESYTGQNVKLRYFLRATISRRLNDVVKEMDIVVHTLSTYPELNSSIKMEVGIEDCLHIEFEYNKSKYHLKDVIVGKIYFLLVRIKIKHMEIDIIKRETTGTGPNVYHENDTIAKYEIMDGAPVRGESIPIRLFLAGYELTPTMRDINKKFSVRYYLNLVLIDEEERRYFKQQEVVLWRKGDIVRKSMSHQAAIASQRFEGTTSLGEVRTPSQLSDNNCRQ</sequence>
<dbReference type="EMBL" id="AF452718">
    <property type="protein sequence ID" value="AAP13353.1"/>
    <property type="molecule type" value="mRNA"/>
</dbReference>
<dbReference type="EMBL" id="BC009747">
    <property type="protein sequence ID" value="AAH09747.1"/>
    <property type="molecule type" value="mRNA"/>
</dbReference>
<dbReference type="EMBL" id="BC014128">
    <property type="protein sequence ID" value="AAH14128.1"/>
    <property type="molecule type" value="mRNA"/>
</dbReference>
<dbReference type="EMBL" id="BC098386">
    <property type="protein sequence ID" value="AAH98386.1"/>
    <property type="molecule type" value="mRNA"/>
</dbReference>
<dbReference type="CCDS" id="CCDS8495.1"/>
<dbReference type="RefSeq" id="NP_443107.1">
    <property type="nucleotide sequence ID" value="NM_052875.5"/>
</dbReference>
<dbReference type="SMR" id="Q4G0F5"/>
<dbReference type="BioGRID" id="125215">
    <property type="interactions" value="83"/>
</dbReference>
<dbReference type="ComplexPortal" id="CPX-7843">
    <property type="entry name" value="Retromer complex, VPS26B variant"/>
</dbReference>
<dbReference type="CORUM" id="Q4G0F5"/>
<dbReference type="FunCoup" id="Q4G0F5">
    <property type="interactions" value="3090"/>
</dbReference>
<dbReference type="IntAct" id="Q4G0F5">
    <property type="interactions" value="59"/>
</dbReference>
<dbReference type="MINT" id="Q4G0F5"/>
<dbReference type="STRING" id="9606.ENSP00000281187"/>
<dbReference type="TCDB" id="9.A.3.1.1">
    <property type="family name" value="the sorting nexin27 (snx27)-retromer assembly apparatus (retromeraa) family"/>
</dbReference>
<dbReference type="GlyGen" id="Q4G0F5">
    <property type="glycosylation" value="1 site, 1 O-linked glycan (1 site)"/>
</dbReference>
<dbReference type="iPTMnet" id="Q4G0F5"/>
<dbReference type="MetOSite" id="Q4G0F5"/>
<dbReference type="PhosphoSitePlus" id="Q4G0F5"/>
<dbReference type="SwissPalm" id="Q4G0F5"/>
<dbReference type="BioMuta" id="VPS26B"/>
<dbReference type="DMDM" id="110816482"/>
<dbReference type="jPOST" id="Q4G0F5"/>
<dbReference type="MassIVE" id="Q4G0F5"/>
<dbReference type="PaxDb" id="9606-ENSP00000281187"/>
<dbReference type="PeptideAtlas" id="Q4G0F5"/>
<dbReference type="ProteomicsDB" id="62102"/>
<dbReference type="Pumba" id="Q4G0F5"/>
<dbReference type="Antibodypedia" id="33166">
    <property type="antibodies" value="119 antibodies from 26 providers"/>
</dbReference>
<dbReference type="DNASU" id="112936"/>
<dbReference type="Ensembl" id="ENST00000281187.10">
    <property type="protein sequence ID" value="ENSP00000281187.5"/>
    <property type="gene ID" value="ENSG00000151502.11"/>
</dbReference>
<dbReference type="Ensembl" id="ENST00000525095.2">
    <property type="protein sequence ID" value="ENSP00000434162.2"/>
    <property type="gene ID" value="ENSG00000151502.11"/>
</dbReference>
<dbReference type="GeneID" id="112936"/>
<dbReference type="KEGG" id="hsa:112936"/>
<dbReference type="MANE-Select" id="ENST00000281187.10">
    <property type="protein sequence ID" value="ENSP00000281187.5"/>
    <property type="RefSeq nucleotide sequence ID" value="NM_052875.5"/>
    <property type="RefSeq protein sequence ID" value="NP_443107.1"/>
</dbReference>
<dbReference type="UCSC" id="uc001qhe.4">
    <property type="organism name" value="human"/>
</dbReference>
<dbReference type="AGR" id="HGNC:28119"/>
<dbReference type="CTD" id="112936"/>
<dbReference type="DisGeNET" id="112936"/>
<dbReference type="GeneCards" id="VPS26B"/>
<dbReference type="HGNC" id="HGNC:28119">
    <property type="gene designation" value="VPS26B"/>
</dbReference>
<dbReference type="HPA" id="ENSG00000151502">
    <property type="expression patterns" value="Low tissue specificity"/>
</dbReference>
<dbReference type="MIM" id="610027">
    <property type="type" value="gene"/>
</dbReference>
<dbReference type="neXtProt" id="NX_Q4G0F5"/>
<dbReference type="OpenTargets" id="ENSG00000151502"/>
<dbReference type="PharmGKB" id="PA128394747"/>
<dbReference type="VEuPathDB" id="HostDB:ENSG00000151502"/>
<dbReference type="eggNOG" id="KOG3063">
    <property type="taxonomic scope" value="Eukaryota"/>
</dbReference>
<dbReference type="GeneTree" id="ENSGT00950000183064"/>
<dbReference type="HOGENOM" id="CLU_031077_0_0_1"/>
<dbReference type="InParanoid" id="Q4G0F5"/>
<dbReference type="OMA" id="FKWKFSS"/>
<dbReference type="OrthoDB" id="3821113at2759"/>
<dbReference type="PAN-GO" id="Q4G0F5">
    <property type="GO annotations" value="4 GO annotations based on evolutionary models"/>
</dbReference>
<dbReference type="PhylomeDB" id="Q4G0F5"/>
<dbReference type="TreeFam" id="TF300907"/>
<dbReference type="PathwayCommons" id="Q4G0F5"/>
<dbReference type="SignaLink" id="Q4G0F5"/>
<dbReference type="BioGRID-ORCS" id="112936">
    <property type="hits" value="11 hits in 1155 CRISPR screens"/>
</dbReference>
<dbReference type="ChiTaRS" id="VPS26B">
    <property type="organism name" value="human"/>
</dbReference>
<dbReference type="GeneWiki" id="VPS26B"/>
<dbReference type="GenomeRNAi" id="112936"/>
<dbReference type="Pharos" id="Q4G0F5">
    <property type="development level" value="Tdark"/>
</dbReference>
<dbReference type="PRO" id="PR:Q4G0F5"/>
<dbReference type="Proteomes" id="UP000005640">
    <property type="component" value="Chromosome 11"/>
</dbReference>
<dbReference type="RNAct" id="Q4G0F5">
    <property type="molecule type" value="protein"/>
</dbReference>
<dbReference type="Bgee" id="ENSG00000151502">
    <property type="expression patterns" value="Expressed in cortical plate and 177 other cell types or tissues"/>
</dbReference>
<dbReference type="ExpressionAtlas" id="Q4G0F5">
    <property type="expression patterns" value="baseline and differential"/>
</dbReference>
<dbReference type="GO" id="GO:0005829">
    <property type="term" value="C:cytosol"/>
    <property type="evidence" value="ECO:0007669"/>
    <property type="project" value="GOC"/>
</dbReference>
<dbReference type="GO" id="GO:0005769">
    <property type="term" value="C:early endosome"/>
    <property type="evidence" value="ECO:0000250"/>
    <property type="project" value="UniProtKB"/>
</dbReference>
<dbReference type="GO" id="GO:0005768">
    <property type="term" value="C:endosome"/>
    <property type="evidence" value="ECO:0000318"/>
    <property type="project" value="GO_Central"/>
</dbReference>
<dbReference type="GO" id="GO:0098978">
    <property type="term" value="C:glutamatergic synapse"/>
    <property type="evidence" value="ECO:0007669"/>
    <property type="project" value="Ensembl"/>
</dbReference>
<dbReference type="GO" id="GO:0005770">
    <property type="term" value="C:late endosome"/>
    <property type="evidence" value="ECO:0000250"/>
    <property type="project" value="UniProtKB"/>
</dbReference>
<dbReference type="GO" id="GO:0045335">
    <property type="term" value="C:phagocytic vesicle"/>
    <property type="evidence" value="ECO:0007669"/>
    <property type="project" value="Ensembl"/>
</dbReference>
<dbReference type="GO" id="GO:0098842">
    <property type="term" value="C:postsynaptic early endosome"/>
    <property type="evidence" value="ECO:0007669"/>
    <property type="project" value="Ensembl"/>
</dbReference>
<dbReference type="GO" id="GO:0098837">
    <property type="term" value="C:postsynaptic recycling endosome"/>
    <property type="evidence" value="ECO:0007669"/>
    <property type="project" value="Ensembl"/>
</dbReference>
<dbReference type="GO" id="GO:0030904">
    <property type="term" value="C:retromer complex"/>
    <property type="evidence" value="ECO:0000250"/>
    <property type="project" value="UniProtKB"/>
</dbReference>
<dbReference type="GO" id="GO:0030906">
    <property type="term" value="C:retromer, cargo-selective complex"/>
    <property type="evidence" value="ECO:0000303"/>
    <property type="project" value="ParkinsonsUK-UCL"/>
</dbReference>
<dbReference type="GO" id="GO:0071346">
    <property type="term" value="P:cellular response to type II interferon"/>
    <property type="evidence" value="ECO:0007669"/>
    <property type="project" value="Ensembl"/>
</dbReference>
<dbReference type="GO" id="GO:0006886">
    <property type="term" value="P:intracellular protein transport"/>
    <property type="evidence" value="ECO:0000318"/>
    <property type="project" value="GO_Central"/>
</dbReference>
<dbReference type="GO" id="GO:0016241">
    <property type="term" value="P:regulation of macroautophagy"/>
    <property type="evidence" value="ECO:0000304"/>
    <property type="project" value="ParkinsonsUK-UCL"/>
</dbReference>
<dbReference type="GO" id="GO:0098696">
    <property type="term" value="P:regulation of neurotransmitter receptor localization to postsynaptic specialization membrane"/>
    <property type="evidence" value="ECO:0007669"/>
    <property type="project" value="Ensembl"/>
</dbReference>
<dbReference type="GO" id="GO:0042147">
    <property type="term" value="P:retrograde transport, endosome to Golgi"/>
    <property type="evidence" value="ECO:0000250"/>
    <property type="project" value="UniProtKB"/>
</dbReference>
<dbReference type="FunFam" id="2.60.40.640:FF:000001">
    <property type="entry name" value="Vacuolar protein sorting-associated protein 26A"/>
    <property type="match status" value="1"/>
</dbReference>
<dbReference type="FunFam" id="2.60.40.640:FF:000002">
    <property type="entry name" value="Vacuolar protein sorting-associated protein 26A"/>
    <property type="match status" value="1"/>
</dbReference>
<dbReference type="Gene3D" id="2.60.40.640">
    <property type="match status" value="2"/>
</dbReference>
<dbReference type="InterPro" id="IPR014752">
    <property type="entry name" value="Arrestin-like_C"/>
</dbReference>
<dbReference type="InterPro" id="IPR028934">
    <property type="entry name" value="Vps26-related"/>
</dbReference>
<dbReference type="PANTHER" id="PTHR12233">
    <property type="entry name" value="VACUOLAR PROTEIN SORTING 26 RELATED"/>
    <property type="match status" value="1"/>
</dbReference>
<dbReference type="Pfam" id="PF03643">
    <property type="entry name" value="Vps26"/>
    <property type="match status" value="1"/>
</dbReference>
<protein>
    <recommendedName>
        <fullName>Vacuolar protein sorting-associated protein 26B</fullName>
    </recommendedName>
    <alternativeName>
        <fullName>Vesicle protein sorting 26B</fullName>
    </alternativeName>
</protein>
<proteinExistence type="evidence at protein level"/>
<gene>
    <name type="primary">VPS26B</name>
</gene>
<name>VP26B_HUMAN</name>